<protein>
    <recommendedName>
        <fullName evidence="1">Putative pre-16S rRNA nuclease</fullName>
        <ecNumber evidence="1">3.1.-.-</ecNumber>
    </recommendedName>
</protein>
<accession>B5BFQ4</accession>
<evidence type="ECO:0000255" key="1">
    <source>
        <dbReference type="HAMAP-Rule" id="MF_00651"/>
    </source>
</evidence>
<sequence>MSDTLLAFDFGTKSIGVAIGQRITGTARPLPAIKAQDGTPDWTLIERLLKEWQPDEIIVGLPLNMDGTEQPLTARARKFANRIHGRFGVTVTLHDERLSTVEARSGLFERGGYRALNKGKVDSASAVIILESYFEQGY</sequence>
<dbReference type="EC" id="3.1.-.-" evidence="1"/>
<dbReference type="EMBL" id="FM200053">
    <property type="protein sequence ID" value="CAR61000.1"/>
    <property type="molecule type" value="Genomic_DNA"/>
</dbReference>
<dbReference type="SMR" id="B5BFQ4"/>
<dbReference type="KEGG" id="sek:SSPA2759"/>
<dbReference type="HOGENOM" id="CLU_098240_3_0_6"/>
<dbReference type="Proteomes" id="UP000001869">
    <property type="component" value="Chromosome"/>
</dbReference>
<dbReference type="GO" id="GO:0005829">
    <property type="term" value="C:cytosol"/>
    <property type="evidence" value="ECO:0007669"/>
    <property type="project" value="TreeGrafter"/>
</dbReference>
<dbReference type="GO" id="GO:0004518">
    <property type="term" value="F:nuclease activity"/>
    <property type="evidence" value="ECO:0007669"/>
    <property type="project" value="UniProtKB-KW"/>
</dbReference>
<dbReference type="GO" id="GO:0000967">
    <property type="term" value="P:rRNA 5'-end processing"/>
    <property type="evidence" value="ECO:0007669"/>
    <property type="project" value="UniProtKB-UniRule"/>
</dbReference>
<dbReference type="CDD" id="cd16964">
    <property type="entry name" value="YqgF"/>
    <property type="match status" value="1"/>
</dbReference>
<dbReference type="FunFam" id="3.30.420.140:FF:000002">
    <property type="entry name" value="Putative pre-16S rRNA nuclease"/>
    <property type="match status" value="1"/>
</dbReference>
<dbReference type="Gene3D" id="3.30.420.140">
    <property type="entry name" value="YqgF/RNase H-like domain"/>
    <property type="match status" value="1"/>
</dbReference>
<dbReference type="HAMAP" id="MF_00651">
    <property type="entry name" value="Nuclease_YqgF"/>
    <property type="match status" value="1"/>
</dbReference>
<dbReference type="InterPro" id="IPR012337">
    <property type="entry name" value="RNaseH-like_sf"/>
</dbReference>
<dbReference type="InterPro" id="IPR005227">
    <property type="entry name" value="YqgF"/>
</dbReference>
<dbReference type="InterPro" id="IPR006641">
    <property type="entry name" value="YqgF/RNaseH-like_dom"/>
</dbReference>
<dbReference type="InterPro" id="IPR037027">
    <property type="entry name" value="YqgF/RNaseH-like_dom_sf"/>
</dbReference>
<dbReference type="NCBIfam" id="TIGR00250">
    <property type="entry name" value="RNAse_H_YqgF"/>
    <property type="match status" value="1"/>
</dbReference>
<dbReference type="PANTHER" id="PTHR33317">
    <property type="entry name" value="POLYNUCLEOTIDYL TRANSFERASE, RIBONUCLEASE H-LIKE SUPERFAMILY PROTEIN"/>
    <property type="match status" value="1"/>
</dbReference>
<dbReference type="PANTHER" id="PTHR33317:SF4">
    <property type="entry name" value="POLYNUCLEOTIDYL TRANSFERASE, RIBONUCLEASE H-LIKE SUPERFAMILY PROTEIN"/>
    <property type="match status" value="1"/>
</dbReference>
<dbReference type="Pfam" id="PF03652">
    <property type="entry name" value="RuvX"/>
    <property type="match status" value="1"/>
</dbReference>
<dbReference type="SMART" id="SM00732">
    <property type="entry name" value="YqgFc"/>
    <property type="match status" value="1"/>
</dbReference>
<dbReference type="SUPFAM" id="SSF53098">
    <property type="entry name" value="Ribonuclease H-like"/>
    <property type="match status" value="1"/>
</dbReference>
<name>YQGF_SALPK</name>
<feature type="chain" id="PRO_1000131072" description="Putative pre-16S rRNA nuclease">
    <location>
        <begin position="1"/>
        <end position="138"/>
    </location>
</feature>
<organism>
    <name type="scientific">Salmonella paratyphi A (strain AKU_12601)</name>
    <dbReference type="NCBI Taxonomy" id="554290"/>
    <lineage>
        <taxon>Bacteria</taxon>
        <taxon>Pseudomonadati</taxon>
        <taxon>Pseudomonadota</taxon>
        <taxon>Gammaproteobacteria</taxon>
        <taxon>Enterobacterales</taxon>
        <taxon>Enterobacteriaceae</taxon>
        <taxon>Salmonella</taxon>
    </lineage>
</organism>
<gene>
    <name evidence="1" type="primary">yqgF</name>
    <name type="ordered locus">SSPA2759</name>
</gene>
<proteinExistence type="inferred from homology"/>
<keyword id="KW-0963">Cytoplasm</keyword>
<keyword id="KW-0378">Hydrolase</keyword>
<keyword id="KW-0540">Nuclease</keyword>
<keyword id="KW-0690">Ribosome biogenesis</keyword>
<reference key="1">
    <citation type="journal article" date="2009" name="BMC Genomics">
        <title>Pseudogene accumulation in the evolutionary histories of Salmonella enterica serovars Paratyphi A and Typhi.</title>
        <authorList>
            <person name="Holt K.E."/>
            <person name="Thomson N.R."/>
            <person name="Wain J."/>
            <person name="Langridge G.C."/>
            <person name="Hasan R."/>
            <person name="Bhutta Z.A."/>
            <person name="Quail M.A."/>
            <person name="Norbertczak H."/>
            <person name="Walker D."/>
            <person name="Simmonds M."/>
            <person name="White B."/>
            <person name="Bason N."/>
            <person name="Mungall K."/>
            <person name="Dougan G."/>
            <person name="Parkhill J."/>
        </authorList>
    </citation>
    <scope>NUCLEOTIDE SEQUENCE [LARGE SCALE GENOMIC DNA]</scope>
    <source>
        <strain>AKU_12601</strain>
    </source>
</reference>
<comment type="function">
    <text evidence="1">Could be a nuclease involved in processing of the 5'-end of pre-16S rRNA.</text>
</comment>
<comment type="subcellular location">
    <subcellularLocation>
        <location evidence="1">Cytoplasm</location>
    </subcellularLocation>
</comment>
<comment type="similarity">
    <text evidence="1">Belongs to the YqgF nuclease family.</text>
</comment>